<dbReference type="EC" id="2.7.7.23" evidence="1"/>
<dbReference type="EC" id="2.3.1.157" evidence="1"/>
<dbReference type="EMBL" id="CP000969">
    <property type="protein sequence ID" value="ACB09637.1"/>
    <property type="molecule type" value="Genomic_DNA"/>
</dbReference>
<dbReference type="RefSeq" id="WP_012311047.1">
    <property type="nucleotide sequence ID" value="NC_010483.1"/>
</dbReference>
<dbReference type="SMR" id="B1LBD9"/>
<dbReference type="KEGG" id="trq:TRQ2_1293"/>
<dbReference type="HOGENOM" id="CLU_029499_15_2_0"/>
<dbReference type="UniPathway" id="UPA00113">
    <property type="reaction ID" value="UER00532"/>
</dbReference>
<dbReference type="UniPathway" id="UPA00113">
    <property type="reaction ID" value="UER00533"/>
</dbReference>
<dbReference type="UniPathway" id="UPA00973"/>
<dbReference type="Proteomes" id="UP000001687">
    <property type="component" value="Chromosome"/>
</dbReference>
<dbReference type="GO" id="GO:0005737">
    <property type="term" value="C:cytoplasm"/>
    <property type="evidence" value="ECO:0007669"/>
    <property type="project" value="UniProtKB-SubCell"/>
</dbReference>
<dbReference type="GO" id="GO:0016020">
    <property type="term" value="C:membrane"/>
    <property type="evidence" value="ECO:0007669"/>
    <property type="project" value="GOC"/>
</dbReference>
<dbReference type="GO" id="GO:0019134">
    <property type="term" value="F:glucosamine-1-phosphate N-acetyltransferase activity"/>
    <property type="evidence" value="ECO:0007669"/>
    <property type="project" value="UniProtKB-UniRule"/>
</dbReference>
<dbReference type="GO" id="GO:0000287">
    <property type="term" value="F:magnesium ion binding"/>
    <property type="evidence" value="ECO:0007669"/>
    <property type="project" value="UniProtKB-UniRule"/>
</dbReference>
<dbReference type="GO" id="GO:0003977">
    <property type="term" value="F:UDP-N-acetylglucosamine diphosphorylase activity"/>
    <property type="evidence" value="ECO:0007669"/>
    <property type="project" value="UniProtKB-UniRule"/>
</dbReference>
<dbReference type="GO" id="GO:0000902">
    <property type="term" value="P:cell morphogenesis"/>
    <property type="evidence" value="ECO:0007669"/>
    <property type="project" value="UniProtKB-UniRule"/>
</dbReference>
<dbReference type="GO" id="GO:0071555">
    <property type="term" value="P:cell wall organization"/>
    <property type="evidence" value="ECO:0007669"/>
    <property type="project" value="UniProtKB-KW"/>
</dbReference>
<dbReference type="GO" id="GO:0009245">
    <property type="term" value="P:lipid A biosynthetic process"/>
    <property type="evidence" value="ECO:0007669"/>
    <property type="project" value="UniProtKB-UniRule"/>
</dbReference>
<dbReference type="GO" id="GO:0009252">
    <property type="term" value="P:peptidoglycan biosynthetic process"/>
    <property type="evidence" value="ECO:0007669"/>
    <property type="project" value="UniProtKB-UniRule"/>
</dbReference>
<dbReference type="GO" id="GO:0008360">
    <property type="term" value="P:regulation of cell shape"/>
    <property type="evidence" value="ECO:0007669"/>
    <property type="project" value="UniProtKB-KW"/>
</dbReference>
<dbReference type="GO" id="GO:0006048">
    <property type="term" value="P:UDP-N-acetylglucosamine biosynthetic process"/>
    <property type="evidence" value="ECO:0007669"/>
    <property type="project" value="UniProtKB-UniPathway"/>
</dbReference>
<dbReference type="CDD" id="cd02540">
    <property type="entry name" value="GT2_GlmU_N_bac"/>
    <property type="match status" value="1"/>
</dbReference>
<dbReference type="CDD" id="cd03353">
    <property type="entry name" value="LbH_GlmU_C"/>
    <property type="match status" value="1"/>
</dbReference>
<dbReference type="Gene3D" id="2.160.10.10">
    <property type="entry name" value="Hexapeptide repeat proteins"/>
    <property type="match status" value="1"/>
</dbReference>
<dbReference type="Gene3D" id="3.90.550.10">
    <property type="entry name" value="Spore Coat Polysaccharide Biosynthesis Protein SpsA, Chain A"/>
    <property type="match status" value="1"/>
</dbReference>
<dbReference type="HAMAP" id="MF_01631">
    <property type="entry name" value="GlmU"/>
    <property type="match status" value="1"/>
</dbReference>
<dbReference type="InterPro" id="IPR005882">
    <property type="entry name" value="Bifunctional_GlmU"/>
</dbReference>
<dbReference type="InterPro" id="IPR050065">
    <property type="entry name" value="GlmU-like"/>
</dbReference>
<dbReference type="InterPro" id="IPR038009">
    <property type="entry name" value="GlmU_C_LbH"/>
</dbReference>
<dbReference type="InterPro" id="IPR001451">
    <property type="entry name" value="Hexapep"/>
</dbReference>
<dbReference type="InterPro" id="IPR018357">
    <property type="entry name" value="Hexapep_transf_CS"/>
</dbReference>
<dbReference type="InterPro" id="IPR025877">
    <property type="entry name" value="MobA-like_NTP_Trfase"/>
</dbReference>
<dbReference type="InterPro" id="IPR029044">
    <property type="entry name" value="Nucleotide-diphossugar_trans"/>
</dbReference>
<dbReference type="InterPro" id="IPR011004">
    <property type="entry name" value="Trimer_LpxA-like_sf"/>
</dbReference>
<dbReference type="NCBIfam" id="TIGR01173">
    <property type="entry name" value="glmU"/>
    <property type="match status" value="1"/>
</dbReference>
<dbReference type="NCBIfam" id="NF010937">
    <property type="entry name" value="PRK14357.1"/>
    <property type="match status" value="1"/>
</dbReference>
<dbReference type="PANTHER" id="PTHR43584:SF3">
    <property type="entry name" value="BIFUNCTIONAL PROTEIN GLMU"/>
    <property type="match status" value="1"/>
</dbReference>
<dbReference type="PANTHER" id="PTHR43584">
    <property type="entry name" value="NUCLEOTIDYL TRANSFERASE"/>
    <property type="match status" value="1"/>
</dbReference>
<dbReference type="Pfam" id="PF00132">
    <property type="entry name" value="Hexapep"/>
    <property type="match status" value="1"/>
</dbReference>
<dbReference type="Pfam" id="PF12804">
    <property type="entry name" value="NTP_transf_3"/>
    <property type="match status" value="1"/>
</dbReference>
<dbReference type="SUPFAM" id="SSF53448">
    <property type="entry name" value="Nucleotide-diphospho-sugar transferases"/>
    <property type="match status" value="1"/>
</dbReference>
<dbReference type="SUPFAM" id="SSF51161">
    <property type="entry name" value="Trimeric LpxA-like enzymes"/>
    <property type="match status" value="1"/>
</dbReference>
<dbReference type="PROSITE" id="PS00101">
    <property type="entry name" value="HEXAPEP_TRANSFERASES"/>
    <property type="match status" value="1"/>
</dbReference>
<protein>
    <recommendedName>
        <fullName evidence="1">Bifunctional protein GlmU</fullName>
    </recommendedName>
    <domain>
        <recommendedName>
            <fullName evidence="1">UDP-N-acetylglucosamine pyrophosphorylase</fullName>
            <ecNumber evidence="1">2.7.7.23</ecNumber>
        </recommendedName>
        <alternativeName>
            <fullName evidence="1">N-acetylglucosamine-1-phosphate uridyltransferase</fullName>
        </alternativeName>
    </domain>
    <domain>
        <recommendedName>
            <fullName evidence="1">Glucosamine-1-phosphate N-acetyltransferase</fullName>
            <ecNumber evidence="1">2.3.1.157</ecNumber>
        </recommendedName>
    </domain>
</protein>
<reference key="1">
    <citation type="journal article" date="2011" name="J. Bacteriol.">
        <title>Genome sequence of Thermotoga sp. strain RQ2, a hyperthermophilic bacterium isolated from a geothermally heated region of the seafloor near Ribeira Quente, the Azores.</title>
        <authorList>
            <person name="Swithers K.S."/>
            <person name="DiPippo J.L."/>
            <person name="Bruce D.C."/>
            <person name="Detter C."/>
            <person name="Tapia R."/>
            <person name="Han S."/>
            <person name="Saunders E."/>
            <person name="Goodwin L.A."/>
            <person name="Han J."/>
            <person name="Woyke T."/>
            <person name="Pitluck S."/>
            <person name="Pennacchio L."/>
            <person name="Nolan M."/>
            <person name="Mikhailova N."/>
            <person name="Lykidis A."/>
            <person name="Land M.L."/>
            <person name="Brettin T."/>
            <person name="Stetter K.O."/>
            <person name="Nelson K.E."/>
            <person name="Gogarten J.P."/>
            <person name="Noll K.M."/>
        </authorList>
    </citation>
    <scope>NUCLEOTIDE SEQUENCE [LARGE SCALE GENOMIC DNA]</scope>
    <source>
        <strain>RQ2</strain>
    </source>
</reference>
<gene>
    <name evidence="1" type="primary">glmU</name>
    <name type="ordered locus">TRQ2_1293</name>
</gene>
<feature type="chain" id="PRO_1000186506" description="Bifunctional protein GlmU">
    <location>
        <begin position="1"/>
        <end position="445"/>
    </location>
</feature>
<feature type="region of interest" description="Pyrophosphorylase" evidence="1">
    <location>
        <begin position="1"/>
        <end position="218"/>
    </location>
</feature>
<feature type="region of interest" description="Linker" evidence="1">
    <location>
        <begin position="219"/>
        <end position="239"/>
    </location>
</feature>
<feature type="region of interest" description="N-acetyltransferase" evidence="1">
    <location>
        <begin position="240"/>
        <end position="445"/>
    </location>
</feature>
<feature type="active site" description="Proton acceptor" evidence="1">
    <location>
        <position position="351"/>
    </location>
</feature>
<feature type="binding site" evidence="1">
    <location>
        <begin position="6"/>
        <end position="9"/>
    </location>
    <ligand>
        <name>UDP-N-acetyl-alpha-D-glucosamine</name>
        <dbReference type="ChEBI" id="CHEBI:57705"/>
    </ligand>
</feature>
<feature type="binding site" evidence="1">
    <location>
        <position position="20"/>
    </location>
    <ligand>
        <name>UDP-N-acetyl-alpha-D-glucosamine</name>
        <dbReference type="ChEBI" id="CHEBI:57705"/>
    </ligand>
</feature>
<feature type="binding site" evidence="1">
    <location>
        <position position="69"/>
    </location>
    <ligand>
        <name>UDP-N-acetyl-alpha-D-glucosamine</name>
        <dbReference type="ChEBI" id="CHEBI:57705"/>
    </ligand>
</feature>
<feature type="binding site" evidence="1">
    <location>
        <begin position="74"/>
        <end position="75"/>
    </location>
    <ligand>
        <name>UDP-N-acetyl-alpha-D-glucosamine</name>
        <dbReference type="ChEBI" id="CHEBI:57705"/>
    </ligand>
</feature>
<feature type="binding site" evidence="1">
    <location>
        <begin position="96"/>
        <end position="98"/>
    </location>
    <ligand>
        <name>UDP-N-acetyl-alpha-D-glucosamine</name>
        <dbReference type="ChEBI" id="CHEBI:57705"/>
    </ligand>
</feature>
<feature type="binding site" evidence="1">
    <location>
        <position position="98"/>
    </location>
    <ligand>
        <name>Mg(2+)</name>
        <dbReference type="ChEBI" id="CHEBI:18420"/>
    </ligand>
</feature>
<feature type="binding site" evidence="1">
    <location>
        <position position="134"/>
    </location>
    <ligand>
        <name>UDP-N-acetyl-alpha-D-glucosamine</name>
        <dbReference type="ChEBI" id="CHEBI:57705"/>
    </ligand>
</feature>
<feature type="binding site" evidence="1">
    <location>
        <position position="147"/>
    </location>
    <ligand>
        <name>UDP-N-acetyl-alpha-D-glucosamine</name>
        <dbReference type="ChEBI" id="CHEBI:57705"/>
    </ligand>
</feature>
<feature type="binding site" evidence="1">
    <location>
        <position position="162"/>
    </location>
    <ligand>
        <name>UDP-N-acetyl-alpha-D-glucosamine</name>
        <dbReference type="ChEBI" id="CHEBI:57705"/>
    </ligand>
</feature>
<feature type="binding site" evidence="1">
    <location>
        <position position="216"/>
    </location>
    <ligand>
        <name>Mg(2+)</name>
        <dbReference type="ChEBI" id="CHEBI:18420"/>
    </ligand>
</feature>
<feature type="binding site" evidence="1">
    <location>
        <position position="216"/>
    </location>
    <ligand>
        <name>UDP-N-acetyl-alpha-D-glucosamine</name>
        <dbReference type="ChEBI" id="CHEBI:57705"/>
    </ligand>
</feature>
<feature type="binding site" evidence="1">
    <location>
        <position position="321"/>
    </location>
    <ligand>
        <name>UDP-N-acetyl-alpha-D-glucosamine</name>
        <dbReference type="ChEBI" id="CHEBI:57705"/>
    </ligand>
</feature>
<feature type="binding site" evidence="1">
    <location>
        <position position="339"/>
    </location>
    <ligand>
        <name>UDP-N-acetyl-alpha-D-glucosamine</name>
        <dbReference type="ChEBI" id="CHEBI:57705"/>
    </ligand>
</feature>
<feature type="binding site" evidence="1">
    <location>
        <position position="354"/>
    </location>
    <ligand>
        <name>UDP-N-acetyl-alpha-D-glucosamine</name>
        <dbReference type="ChEBI" id="CHEBI:57705"/>
    </ligand>
</feature>
<feature type="binding site" evidence="1">
    <location>
        <position position="365"/>
    </location>
    <ligand>
        <name>UDP-N-acetyl-alpha-D-glucosamine</name>
        <dbReference type="ChEBI" id="CHEBI:57705"/>
    </ligand>
</feature>
<feature type="binding site" evidence="1">
    <location>
        <position position="368"/>
    </location>
    <ligand>
        <name>acetyl-CoA</name>
        <dbReference type="ChEBI" id="CHEBI:57288"/>
    </ligand>
</feature>
<feature type="binding site" evidence="1">
    <location>
        <begin position="374"/>
        <end position="375"/>
    </location>
    <ligand>
        <name>acetyl-CoA</name>
        <dbReference type="ChEBI" id="CHEBI:57288"/>
    </ligand>
</feature>
<feature type="binding site" evidence="1">
    <location>
        <position position="393"/>
    </location>
    <ligand>
        <name>acetyl-CoA</name>
        <dbReference type="ChEBI" id="CHEBI:57288"/>
    </ligand>
</feature>
<feature type="binding site" evidence="1">
    <location>
        <position position="411"/>
    </location>
    <ligand>
        <name>acetyl-CoA</name>
        <dbReference type="ChEBI" id="CHEBI:57288"/>
    </ligand>
</feature>
<feature type="binding site" evidence="1">
    <location>
        <position position="428"/>
    </location>
    <ligand>
        <name>acetyl-CoA</name>
        <dbReference type="ChEBI" id="CHEBI:57288"/>
    </ligand>
</feature>
<sequence>MRALVLAAGKGTRMKSKIPKVLHPLSGKPMIEWVVETAGKVAQKVGVVLGFEAELVRKTLPEWVDVFVQEEQLGTAHAVMCAKDFIEPGDDVLILYGDVPLISENTLKRMIEEHRKGADVTILVADLEDPSGYGRVIQDGDKYRIIEDADLPEELKSVTTINTGFYVFSGDFLLRALPEIKNENAKGEYYLTDAVNFAEKVRVVKTDDLLEITGVNTRKTLVWLEEQLRMRKIEELLENGVTILDPATTYIHYSVEIGMDTVIHPMTFIEGKSRVGENCEIGPMTRIVDCEIGNNVKITRSECFKSVIEDDVSVGPFARLREGTILKKSSKIGNFVEIKKSTIGEGTKAQHLSYIGDAFVGKNVNIGAGTITCNYDGKKKNPTFIEDGAFIGSNSSLVAPVRIGEGALIGAGSVITEDVPPYSLGLGRAMQVVKEGWVLKKRKEE</sequence>
<organism>
    <name type="scientific">Thermotoga sp. (strain RQ2)</name>
    <dbReference type="NCBI Taxonomy" id="126740"/>
    <lineage>
        <taxon>Bacteria</taxon>
        <taxon>Thermotogati</taxon>
        <taxon>Thermotogota</taxon>
        <taxon>Thermotogae</taxon>
        <taxon>Thermotogales</taxon>
        <taxon>Thermotogaceae</taxon>
        <taxon>Thermotoga</taxon>
    </lineage>
</organism>
<name>GLMU_THESQ</name>
<evidence type="ECO:0000255" key="1">
    <source>
        <dbReference type="HAMAP-Rule" id="MF_01631"/>
    </source>
</evidence>
<keyword id="KW-0012">Acyltransferase</keyword>
<keyword id="KW-0133">Cell shape</keyword>
<keyword id="KW-0961">Cell wall biogenesis/degradation</keyword>
<keyword id="KW-0963">Cytoplasm</keyword>
<keyword id="KW-0460">Magnesium</keyword>
<keyword id="KW-0479">Metal-binding</keyword>
<keyword id="KW-0511">Multifunctional enzyme</keyword>
<keyword id="KW-0548">Nucleotidyltransferase</keyword>
<keyword id="KW-0573">Peptidoglycan synthesis</keyword>
<keyword id="KW-0677">Repeat</keyword>
<keyword id="KW-0808">Transferase</keyword>
<comment type="function">
    <text evidence="1">Catalyzes the last two sequential reactions in the de novo biosynthetic pathway for UDP-N-acetylglucosamine (UDP-GlcNAc). The C-terminal domain catalyzes the transfer of acetyl group from acetyl coenzyme A to glucosamine-1-phosphate (GlcN-1-P) to produce N-acetylglucosamine-1-phosphate (GlcNAc-1-P), which is converted into UDP-GlcNAc by the transfer of uridine 5-monophosphate (from uridine 5-triphosphate), a reaction catalyzed by the N-terminal domain.</text>
</comment>
<comment type="catalytic activity">
    <reaction evidence="1">
        <text>alpha-D-glucosamine 1-phosphate + acetyl-CoA = N-acetyl-alpha-D-glucosamine 1-phosphate + CoA + H(+)</text>
        <dbReference type="Rhea" id="RHEA:13725"/>
        <dbReference type="ChEBI" id="CHEBI:15378"/>
        <dbReference type="ChEBI" id="CHEBI:57287"/>
        <dbReference type="ChEBI" id="CHEBI:57288"/>
        <dbReference type="ChEBI" id="CHEBI:57776"/>
        <dbReference type="ChEBI" id="CHEBI:58516"/>
        <dbReference type="EC" id="2.3.1.157"/>
    </reaction>
</comment>
<comment type="catalytic activity">
    <reaction evidence="1">
        <text>N-acetyl-alpha-D-glucosamine 1-phosphate + UTP + H(+) = UDP-N-acetyl-alpha-D-glucosamine + diphosphate</text>
        <dbReference type="Rhea" id="RHEA:13509"/>
        <dbReference type="ChEBI" id="CHEBI:15378"/>
        <dbReference type="ChEBI" id="CHEBI:33019"/>
        <dbReference type="ChEBI" id="CHEBI:46398"/>
        <dbReference type="ChEBI" id="CHEBI:57705"/>
        <dbReference type="ChEBI" id="CHEBI:57776"/>
        <dbReference type="EC" id="2.7.7.23"/>
    </reaction>
</comment>
<comment type="cofactor">
    <cofactor evidence="1">
        <name>Mg(2+)</name>
        <dbReference type="ChEBI" id="CHEBI:18420"/>
    </cofactor>
    <text evidence="1">Binds 1 Mg(2+) ion per subunit.</text>
</comment>
<comment type="pathway">
    <text evidence="1">Nucleotide-sugar biosynthesis; UDP-N-acetyl-alpha-D-glucosamine biosynthesis; N-acetyl-alpha-D-glucosamine 1-phosphate from alpha-D-glucosamine 6-phosphate (route II): step 2/2.</text>
</comment>
<comment type="pathway">
    <text evidence="1">Nucleotide-sugar biosynthesis; UDP-N-acetyl-alpha-D-glucosamine biosynthesis; UDP-N-acetyl-alpha-D-glucosamine from N-acetyl-alpha-D-glucosamine 1-phosphate: step 1/1.</text>
</comment>
<comment type="pathway">
    <text evidence="1">Bacterial outer membrane biogenesis; LPS lipid A biosynthesis.</text>
</comment>
<comment type="subunit">
    <text evidence="1">Homotrimer.</text>
</comment>
<comment type="subcellular location">
    <subcellularLocation>
        <location evidence="1">Cytoplasm</location>
    </subcellularLocation>
</comment>
<comment type="similarity">
    <text evidence="1">In the N-terminal section; belongs to the N-acetylglucosamine-1-phosphate uridyltransferase family.</text>
</comment>
<comment type="similarity">
    <text evidence="1">In the C-terminal section; belongs to the transferase hexapeptide repeat family.</text>
</comment>
<accession>B1LBD9</accession>
<proteinExistence type="inferred from homology"/>